<proteinExistence type="inferred from homology"/>
<organism>
    <name type="scientific">Escherichia coli O157:H7</name>
    <dbReference type="NCBI Taxonomy" id="83334"/>
    <lineage>
        <taxon>Bacteria</taxon>
        <taxon>Pseudomonadati</taxon>
        <taxon>Pseudomonadota</taxon>
        <taxon>Gammaproteobacteria</taxon>
        <taxon>Enterobacterales</taxon>
        <taxon>Enterobacteriaceae</taxon>
        <taxon>Escherichia</taxon>
    </lineage>
</organism>
<protein>
    <recommendedName>
        <fullName>Uncharacterized protein YhiD</fullName>
    </recommendedName>
</protein>
<keyword id="KW-0997">Cell inner membrane</keyword>
<keyword id="KW-1003">Cell membrane</keyword>
<keyword id="KW-0472">Membrane</keyword>
<keyword id="KW-1185">Reference proteome</keyword>
<keyword id="KW-0812">Transmembrane</keyword>
<keyword id="KW-1133">Transmembrane helix</keyword>
<feature type="chain" id="PRO_0000202033" description="Uncharacterized protein YhiD">
    <location>
        <begin position="1"/>
        <end position="215"/>
    </location>
</feature>
<feature type="transmembrane region" description="Helical" evidence="1">
    <location>
        <begin position="1"/>
        <end position="21"/>
    </location>
</feature>
<feature type="transmembrane region" description="Helical" evidence="1">
    <location>
        <begin position="36"/>
        <end position="56"/>
    </location>
</feature>
<feature type="transmembrane region" description="Helical" evidence="1">
    <location>
        <begin position="67"/>
        <end position="87"/>
    </location>
</feature>
<feature type="transmembrane region" description="Helical" evidence="1">
    <location>
        <begin position="92"/>
        <end position="112"/>
    </location>
</feature>
<feature type="transmembrane region" description="Helical" evidence="1">
    <location>
        <begin position="118"/>
        <end position="138"/>
    </location>
</feature>
<gene>
    <name type="primary">yhiD</name>
    <name type="ordered locus">Z4920</name>
    <name type="ordered locus">ECs4388</name>
</gene>
<sequence>MTAEFIIRLILAAIACGAIGMERQMRGKGAGLRTHVLIGMGSALFMIVSKYGFADVLSLDHVGLDPSRIAAQVVTGVGFIGAGNILVRNQNIVGLTTAADIWVTAAIGMVIGSGMYELGIYGSVMTLLVLEVFHQLTFRLMNKNYHLQLTLVNGNTVSMLDWFKQQKIKTDLVSLQENEDHEVVAIDIQLHATTSIEDLLRLLKGMAGVKGVSIS</sequence>
<name>YHID_ECO57</name>
<dbReference type="EMBL" id="AE005174">
    <property type="protein sequence ID" value="AAG58649.1"/>
    <property type="molecule type" value="Genomic_DNA"/>
</dbReference>
<dbReference type="EMBL" id="BA000007">
    <property type="protein sequence ID" value="BAB37811.2"/>
    <property type="status" value="ALT_INIT"/>
    <property type="molecule type" value="Genomic_DNA"/>
</dbReference>
<dbReference type="PIR" id="D91177">
    <property type="entry name" value="D91177"/>
</dbReference>
<dbReference type="PIR" id="E86023">
    <property type="entry name" value="E86023"/>
</dbReference>
<dbReference type="RefSeq" id="NP_312415.1">
    <property type="nucleotide sequence ID" value="NC_002695.1"/>
</dbReference>
<dbReference type="RefSeq" id="WP_001296814.1">
    <property type="nucleotide sequence ID" value="NZ_VOAI01000004.1"/>
</dbReference>
<dbReference type="SMR" id="P0AFV3"/>
<dbReference type="STRING" id="155864.Z4920"/>
<dbReference type="GeneID" id="915755"/>
<dbReference type="KEGG" id="ece:Z4920"/>
<dbReference type="KEGG" id="ecs:ECs_4388"/>
<dbReference type="PATRIC" id="fig|386585.9.peg.4585"/>
<dbReference type="eggNOG" id="COG1285">
    <property type="taxonomic scope" value="Bacteria"/>
</dbReference>
<dbReference type="HOGENOM" id="CLU_079292_0_1_6"/>
<dbReference type="OMA" id="IMITSQY"/>
<dbReference type="Proteomes" id="UP000000558">
    <property type="component" value="Chromosome"/>
</dbReference>
<dbReference type="Proteomes" id="UP000002519">
    <property type="component" value="Chromosome"/>
</dbReference>
<dbReference type="GO" id="GO:0005886">
    <property type="term" value="C:plasma membrane"/>
    <property type="evidence" value="ECO:0007669"/>
    <property type="project" value="UniProtKB-SubCell"/>
</dbReference>
<dbReference type="InterPro" id="IPR003416">
    <property type="entry name" value="MgtC/SapB/SrpB/YhiD_fam"/>
</dbReference>
<dbReference type="InterPro" id="IPR049177">
    <property type="entry name" value="MgtC_SapB_SrpB_YhiD_N"/>
</dbReference>
<dbReference type="NCBIfam" id="NF007431">
    <property type="entry name" value="PRK09977.1"/>
    <property type="match status" value="1"/>
</dbReference>
<dbReference type="PANTHER" id="PTHR33778:SF1">
    <property type="entry name" value="MAGNESIUM TRANSPORTER YHID-RELATED"/>
    <property type="match status" value="1"/>
</dbReference>
<dbReference type="PANTHER" id="PTHR33778">
    <property type="entry name" value="PROTEIN MGTC"/>
    <property type="match status" value="1"/>
</dbReference>
<dbReference type="Pfam" id="PF02308">
    <property type="entry name" value="MgtC"/>
    <property type="match status" value="1"/>
</dbReference>
<dbReference type="PRINTS" id="PR01837">
    <property type="entry name" value="MGTCSAPBPROT"/>
</dbReference>
<evidence type="ECO:0000255" key="1"/>
<evidence type="ECO:0000305" key="2"/>
<comment type="subcellular location">
    <subcellularLocation>
        <location evidence="2">Cell inner membrane</location>
        <topology evidence="2">Multi-pass membrane protein</topology>
    </subcellularLocation>
</comment>
<comment type="similarity">
    <text evidence="2">Belongs to the MgtC/SapB family.</text>
</comment>
<comment type="sequence caution" evidence="2">
    <conflict type="erroneous initiation">
        <sequence resource="EMBL-CDS" id="BAB37811"/>
    </conflict>
    <text>Truncated N-terminus.</text>
</comment>
<accession>P0AFV3</accession>
<accession>P26606</accession>
<reference key="1">
    <citation type="journal article" date="2001" name="Nature">
        <title>Genome sequence of enterohaemorrhagic Escherichia coli O157:H7.</title>
        <authorList>
            <person name="Perna N.T."/>
            <person name="Plunkett G. III"/>
            <person name="Burland V."/>
            <person name="Mau B."/>
            <person name="Glasner J.D."/>
            <person name="Rose D.J."/>
            <person name="Mayhew G.F."/>
            <person name="Evans P.S."/>
            <person name="Gregor J."/>
            <person name="Kirkpatrick H.A."/>
            <person name="Posfai G."/>
            <person name="Hackett J."/>
            <person name="Klink S."/>
            <person name="Boutin A."/>
            <person name="Shao Y."/>
            <person name="Miller L."/>
            <person name="Grotbeck E.J."/>
            <person name="Davis N.W."/>
            <person name="Lim A."/>
            <person name="Dimalanta E.T."/>
            <person name="Potamousis K."/>
            <person name="Apodaca J."/>
            <person name="Anantharaman T.S."/>
            <person name="Lin J."/>
            <person name="Yen G."/>
            <person name="Schwartz D.C."/>
            <person name="Welch R.A."/>
            <person name="Blattner F.R."/>
        </authorList>
    </citation>
    <scope>NUCLEOTIDE SEQUENCE [LARGE SCALE GENOMIC DNA]</scope>
    <source>
        <strain>O157:H7 / EDL933 / ATCC 700927 / EHEC</strain>
    </source>
</reference>
<reference key="2">
    <citation type="journal article" date="2001" name="DNA Res.">
        <title>Complete genome sequence of enterohemorrhagic Escherichia coli O157:H7 and genomic comparison with a laboratory strain K-12.</title>
        <authorList>
            <person name="Hayashi T."/>
            <person name="Makino K."/>
            <person name="Ohnishi M."/>
            <person name="Kurokawa K."/>
            <person name="Ishii K."/>
            <person name="Yokoyama K."/>
            <person name="Han C.-G."/>
            <person name="Ohtsubo E."/>
            <person name="Nakayama K."/>
            <person name="Murata T."/>
            <person name="Tanaka M."/>
            <person name="Tobe T."/>
            <person name="Iida T."/>
            <person name="Takami H."/>
            <person name="Honda T."/>
            <person name="Sasakawa C."/>
            <person name="Ogasawara N."/>
            <person name="Yasunaga T."/>
            <person name="Kuhara S."/>
            <person name="Shiba T."/>
            <person name="Hattori M."/>
            <person name="Shinagawa H."/>
        </authorList>
    </citation>
    <scope>NUCLEOTIDE SEQUENCE [LARGE SCALE GENOMIC DNA]</scope>
    <source>
        <strain>O157:H7 / Sakai / RIMD 0509952 / EHEC</strain>
    </source>
</reference>